<gene>
    <name evidence="1" type="primary">mnmE</name>
    <name evidence="1" type="synonym">trmE</name>
    <name type="ordered locus">Tbd_2824</name>
</gene>
<accession>Q3SF39</accession>
<feature type="chain" id="PRO_0000345931" description="tRNA modification GTPase MnmE">
    <location>
        <begin position="1"/>
        <end position="446"/>
    </location>
</feature>
<feature type="domain" description="TrmE-type G">
    <location>
        <begin position="220"/>
        <end position="372"/>
    </location>
</feature>
<feature type="binding site" evidence="1">
    <location>
        <position position="28"/>
    </location>
    <ligand>
        <name>(6S)-5-formyl-5,6,7,8-tetrahydrofolate</name>
        <dbReference type="ChEBI" id="CHEBI:57457"/>
    </ligand>
</feature>
<feature type="binding site" evidence="1">
    <location>
        <position position="85"/>
    </location>
    <ligand>
        <name>(6S)-5-formyl-5,6,7,8-tetrahydrofolate</name>
        <dbReference type="ChEBI" id="CHEBI:57457"/>
    </ligand>
</feature>
<feature type="binding site" evidence="1">
    <location>
        <position position="124"/>
    </location>
    <ligand>
        <name>(6S)-5-formyl-5,6,7,8-tetrahydrofolate</name>
        <dbReference type="ChEBI" id="CHEBI:57457"/>
    </ligand>
</feature>
<feature type="binding site" evidence="1">
    <location>
        <begin position="230"/>
        <end position="235"/>
    </location>
    <ligand>
        <name>GTP</name>
        <dbReference type="ChEBI" id="CHEBI:37565"/>
    </ligand>
</feature>
<feature type="binding site" evidence="1">
    <location>
        <position position="230"/>
    </location>
    <ligand>
        <name>K(+)</name>
        <dbReference type="ChEBI" id="CHEBI:29103"/>
    </ligand>
</feature>
<feature type="binding site" evidence="1">
    <location>
        <position position="234"/>
    </location>
    <ligand>
        <name>Mg(2+)</name>
        <dbReference type="ChEBI" id="CHEBI:18420"/>
    </ligand>
</feature>
<feature type="binding site" evidence="1">
    <location>
        <begin position="249"/>
        <end position="255"/>
    </location>
    <ligand>
        <name>GTP</name>
        <dbReference type="ChEBI" id="CHEBI:37565"/>
    </ligand>
</feature>
<feature type="binding site" evidence="1">
    <location>
        <position position="249"/>
    </location>
    <ligand>
        <name>K(+)</name>
        <dbReference type="ChEBI" id="CHEBI:29103"/>
    </ligand>
</feature>
<feature type="binding site" evidence="1">
    <location>
        <position position="251"/>
    </location>
    <ligand>
        <name>K(+)</name>
        <dbReference type="ChEBI" id="CHEBI:29103"/>
    </ligand>
</feature>
<feature type="binding site" evidence="1">
    <location>
        <position position="254"/>
    </location>
    <ligand>
        <name>K(+)</name>
        <dbReference type="ChEBI" id="CHEBI:29103"/>
    </ligand>
</feature>
<feature type="binding site" evidence="1">
    <location>
        <position position="255"/>
    </location>
    <ligand>
        <name>Mg(2+)</name>
        <dbReference type="ChEBI" id="CHEBI:18420"/>
    </ligand>
</feature>
<feature type="binding site" evidence="1">
    <location>
        <begin position="274"/>
        <end position="277"/>
    </location>
    <ligand>
        <name>GTP</name>
        <dbReference type="ChEBI" id="CHEBI:37565"/>
    </ligand>
</feature>
<feature type="binding site" evidence="1">
    <location>
        <position position="446"/>
    </location>
    <ligand>
        <name>(6S)-5-formyl-5,6,7,8-tetrahydrofolate</name>
        <dbReference type="ChEBI" id="CHEBI:57457"/>
    </ligand>
</feature>
<organism>
    <name type="scientific">Thiobacillus denitrificans (strain ATCC 25259 / T1)</name>
    <dbReference type="NCBI Taxonomy" id="292415"/>
    <lineage>
        <taxon>Bacteria</taxon>
        <taxon>Pseudomonadati</taxon>
        <taxon>Pseudomonadota</taxon>
        <taxon>Betaproteobacteria</taxon>
        <taxon>Nitrosomonadales</taxon>
        <taxon>Thiobacillaceae</taxon>
        <taxon>Thiobacillus</taxon>
    </lineage>
</organism>
<dbReference type="EC" id="3.6.-.-" evidence="1"/>
<dbReference type="EMBL" id="CP000116">
    <property type="protein sequence ID" value="AAZ98777.1"/>
    <property type="molecule type" value="Genomic_DNA"/>
</dbReference>
<dbReference type="RefSeq" id="WP_011313336.1">
    <property type="nucleotide sequence ID" value="NC_007404.1"/>
</dbReference>
<dbReference type="SMR" id="Q3SF39"/>
<dbReference type="STRING" id="292415.Tbd_2824"/>
<dbReference type="KEGG" id="tbd:Tbd_2824"/>
<dbReference type="eggNOG" id="COG0486">
    <property type="taxonomic scope" value="Bacteria"/>
</dbReference>
<dbReference type="HOGENOM" id="CLU_019624_4_1_4"/>
<dbReference type="OrthoDB" id="9805918at2"/>
<dbReference type="Proteomes" id="UP000008291">
    <property type="component" value="Chromosome"/>
</dbReference>
<dbReference type="GO" id="GO:0005829">
    <property type="term" value="C:cytosol"/>
    <property type="evidence" value="ECO:0007669"/>
    <property type="project" value="TreeGrafter"/>
</dbReference>
<dbReference type="GO" id="GO:0005525">
    <property type="term" value="F:GTP binding"/>
    <property type="evidence" value="ECO:0007669"/>
    <property type="project" value="UniProtKB-UniRule"/>
</dbReference>
<dbReference type="GO" id="GO:0003924">
    <property type="term" value="F:GTPase activity"/>
    <property type="evidence" value="ECO:0007669"/>
    <property type="project" value="UniProtKB-UniRule"/>
</dbReference>
<dbReference type="GO" id="GO:0046872">
    <property type="term" value="F:metal ion binding"/>
    <property type="evidence" value="ECO:0007669"/>
    <property type="project" value="UniProtKB-KW"/>
</dbReference>
<dbReference type="GO" id="GO:0030488">
    <property type="term" value="P:tRNA methylation"/>
    <property type="evidence" value="ECO:0007669"/>
    <property type="project" value="TreeGrafter"/>
</dbReference>
<dbReference type="GO" id="GO:0002098">
    <property type="term" value="P:tRNA wobble uridine modification"/>
    <property type="evidence" value="ECO:0007669"/>
    <property type="project" value="TreeGrafter"/>
</dbReference>
<dbReference type="CDD" id="cd04164">
    <property type="entry name" value="trmE"/>
    <property type="match status" value="1"/>
</dbReference>
<dbReference type="CDD" id="cd14858">
    <property type="entry name" value="TrmE_N"/>
    <property type="match status" value="1"/>
</dbReference>
<dbReference type="Gene3D" id="3.40.50.300">
    <property type="entry name" value="P-loop containing nucleotide triphosphate hydrolases"/>
    <property type="match status" value="1"/>
</dbReference>
<dbReference type="Gene3D" id="3.30.1360.120">
    <property type="entry name" value="Probable tRNA modification gtpase trme, domain 1"/>
    <property type="match status" value="1"/>
</dbReference>
<dbReference type="Gene3D" id="1.20.120.430">
    <property type="entry name" value="tRNA modification GTPase MnmE domain 2"/>
    <property type="match status" value="1"/>
</dbReference>
<dbReference type="HAMAP" id="MF_00379">
    <property type="entry name" value="GTPase_MnmE"/>
    <property type="match status" value="1"/>
</dbReference>
<dbReference type="InterPro" id="IPR031168">
    <property type="entry name" value="G_TrmE"/>
</dbReference>
<dbReference type="InterPro" id="IPR006073">
    <property type="entry name" value="GTP-bd"/>
</dbReference>
<dbReference type="InterPro" id="IPR018948">
    <property type="entry name" value="GTP-bd_TrmE_N"/>
</dbReference>
<dbReference type="InterPro" id="IPR004520">
    <property type="entry name" value="GTPase_MnmE"/>
</dbReference>
<dbReference type="InterPro" id="IPR027368">
    <property type="entry name" value="MnmE_dom2"/>
</dbReference>
<dbReference type="InterPro" id="IPR025867">
    <property type="entry name" value="MnmE_helical"/>
</dbReference>
<dbReference type="InterPro" id="IPR027417">
    <property type="entry name" value="P-loop_NTPase"/>
</dbReference>
<dbReference type="InterPro" id="IPR005225">
    <property type="entry name" value="Small_GTP-bd"/>
</dbReference>
<dbReference type="InterPro" id="IPR027266">
    <property type="entry name" value="TrmE/GcvT_dom1"/>
</dbReference>
<dbReference type="NCBIfam" id="TIGR00450">
    <property type="entry name" value="mnmE_trmE_thdF"/>
    <property type="match status" value="1"/>
</dbReference>
<dbReference type="NCBIfam" id="NF003661">
    <property type="entry name" value="PRK05291.1-3"/>
    <property type="match status" value="1"/>
</dbReference>
<dbReference type="NCBIfam" id="TIGR00231">
    <property type="entry name" value="small_GTP"/>
    <property type="match status" value="1"/>
</dbReference>
<dbReference type="PANTHER" id="PTHR42714">
    <property type="entry name" value="TRNA MODIFICATION GTPASE GTPBP3"/>
    <property type="match status" value="1"/>
</dbReference>
<dbReference type="PANTHER" id="PTHR42714:SF2">
    <property type="entry name" value="TRNA MODIFICATION GTPASE GTPBP3, MITOCHONDRIAL"/>
    <property type="match status" value="1"/>
</dbReference>
<dbReference type="Pfam" id="PF01926">
    <property type="entry name" value="MMR_HSR1"/>
    <property type="match status" value="1"/>
</dbReference>
<dbReference type="Pfam" id="PF12631">
    <property type="entry name" value="MnmE_helical"/>
    <property type="match status" value="1"/>
</dbReference>
<dbReference type="Pfam" id="PF10396">
    <property type="entry name" value="TrmE_N"/>
    <property type="match status" value="1"/>
</dbReference>
<dbReference type="PRINTS" id="PR00326">
    <property type="entry name" value="GTP1OBG"/>
</dbReference>
<dbReference type="SUPFAM" id="SSF52540">
    <property type="entry name" value="P-loop containing nucleoside triphosphate hydrolases"/>
    <property type="match status" value="1"/>
</dbReference>
<dbReference type="PROSITE" id="PS51709">
    <property type="entry name" value="G_TRME"/>
    <property type="match status" value="1"/>
</dbReference>
<protein>
    <recommendedName>
        <fullName evidence="1">tRNA modification GTPase MnmE</fullName>
        <ecNumber evidence="1">3.6.-.-</ecNumber>
    </recommendedName>
</protein>
<evidence type="ECO:0000255" key="1">
    <source>
        <dbReference type="HAMAP-Rule" id="MF_00379"/>
    </source>
</evidence>
<keyword id="KW-0963">Cytoplasm</keyword>
<keyword id="KW-0342">GTP-binding</keyword>
<keyword id="KW-0378">Hydrolase</keyword>
<keyword id="KW-0460">Magnesium</keyword>
<keyword id="KW-0479">Metal-binding</keyword>
<keyword id="KW-0547">Nucleotide-binding</keyword>
<keyword id="KW-0630">Potassium</keyword>
<keyword id="KW-1185">Reference proteome</keyword>
<keyword id="KW-0819">tRNA processing</keyword>
<name>MNME_THIDA</name>
<comment type="function">
    <text evidence="1">Exhibits a very high intrinsic GTPase hydrolysis rate. Involved in the addition of a carboxymethylaminomethyl (cmnm) group at the wobble position (U34) of certain tRNAs, forming tRNA-cmnm(5)s(2)U34.</text>
</comment>
<comment type="cofactor">
    <cofactor evidence="1">
        <name>K(+)</name>
        <dbReference type="ChEBI" id="CHEBI:29103"/>
    </cofactor>
    <text evidence="1">Binds 1 potassium ion per subunit.</text>
</comment>
<comment type="subunit">
    <text evidence="1">Homodimer. Heterotetramer of two MnmE and two MnmG subunits.</text>
</comment>
<comment type="subcellular location">
    <subcellularLocation>
        <location evidence="1">Cytoplasm</location>
    </subcellularLocation>
</comment>
<comment type="similarity">
    <text evidence="1">Belongs to the TRAFAC class TrmE-Era-EngA-EngB-Septin-like GTPase superfamily. TrmE GTPase family.</text>
</comment>
<sequence>MANPLPPRPDLIAAVATAPGRGGVGVVRVSGPDVGPLAVAILGRLPEPRHVTYCRFLDRAGAPLDEGIALYFAAPHSFTGEHVLELQGHGGPVVLDLILQRCLELGARLAEPGEFSRRAFLNGKLDLAQAEAVADLIDAASAEAARSALRSLSGEFSARIDELVEQLVRLRTLVEATLDFPDEEIDFLEQADAFGRLKAIGTSVAAVRSQARQGVLLREGLTVVLVGQPNVGKSSLLNRLAGFDAAIVTEIAGTTRDTVREAIQIEGVPIHVIDTAGLRETSDPIEQLGIARSWEAVEKADVALLLVDAAHGVGAHEAQILAKLPDVVRLTVHNKIDVAGEAPRATADEIWLSAKSGEGVDLLRAKLLQAAGWQAAGEGAFMARTRHLDALDRAARHIEQAGAVARQLELFAEELRLAQAALAEITGEFSADALLGEIFGSFCIGK</sequence>
<proteinExistence type="inferred from homology"/>
<reference key="1">
    <citation type="journal article" date="2006" name="J. Bacteriol.">
        <title>The genome sequence of the obligately chemolithoautotrophic, facultatively anaerobic bacterium Thiobacillus denitrificans.</title>
        <authorList>
            <person name="Beller H.R."/>
            <person name="Chain P.S."/>
            <person name="Letain T.E."/>
            <person name="Chakicherla A."/>
            <person name="Larimer F.W."/>
            <person name="Richardson P.M."/>
            <person name="Coleman M.A."/>
            <person name="Wood A.P."/>
            <person name="Kelly D.P."/>
        </authorList>
    </citation>
    <scope>NUCLEOTIDE SEQUENCE [LARGE SCALE GENOMIC DNA]</scope>
    <source>
        <strain>ATCC 25259 / T1</strain>
    </source>
</reference>